<dbReference type="EC" id="7.4.2.8" evidence="1"/>
<dbReference type="EMBL" id="CP000304">
    <property type="protein sequence ID" value="ABP80804.1"/>
    <property type="status" value="ALT_INIT"/>
    <property type="molecule type" value="Genomic_DNA"/>
</dbReference>
<dbReference type="RefSeq" id="WP_041755677.1">
    <property type="nucleotide sequence ID" value="NC_009434.1"/>
</dbReference>
<dbReference type="SMR" id="A4VPA3"/>
<dbReference type="KEGG" id="psa:PST_3166"/>
<dbReference type="eggNOG" id="COG0653">
    <property type="taxonomic scope" value="Bacteria"/>
</dbReference>
<dbReference type="HOGENOM" id="CLU_005314_3_0_6"/>
<dbReference type="Proteomes" id="UP000000233">
    <property type="component" value="Chromosome"/>
</dbReference>
<dbReference type="GO" id="GO:0031522">
    <property type="term" value="C:cell envelope Sec protein transport complex"/>
    <property type="evidence" value="ECO:0007669"/>
    <property type="project" value="TreeGrafter"/>
</dbReference>
<dbReference type="GO" id="GO:0005829">
    <property type="term" value="C:cytosol"/>
    <property type="evidence" value="ECO:0007669"/>
    <property type="project" value="TreeGrafter"/>
</dbReference>
<dbReference type="GO" id="GO:0005886">
    <property type="term" value="C:plasma membrane"/>
    <property type="evidence" value="ECO:0007669"/>
    <property type="project" value="UniProtKB-SubCell"/>
</dbReference>
<dbReference type="GO" id="GO:0005524">
    <property type="term" value="F:ATP binding"/>
    <property type="evidence" value="ECO:0007669"/>
    <property type="project" value="UniProtKB-UniRule"/>
</dbReference>
<dbReference type="GO" id="GO:0046872">
    <property type="term" value="F:metal ion binding"/>
    <property type="evidence" value="ECO:0007669"/>
    <property type="project" value="UniProtKB-KW"/>
</dbReference>
<dbReference type="GO" id="GO:0008564">
    <property type="term" value="F:protein-exporting ATPase activity"/>
    <property type="evidence" value="ECO:0007669"/>
    <property type="project" value="UniProtKB-EC"/>
</dbReference>
<dbReference type="GO" id="GO:0065002">
    <property type="term" value="P:intracellular protein transmembrane transport"/>
    <property type="evidence" value="ECO:0007669"/>
    <property type="project" value="UniProtKB-UniRule"/>
</dbReference>
<dbReference type="GO" id="GO:0017038">
    <property type="term" value="P:protein import"/>
    <property type="evidence" value="ECO:0007669"/>
    <property type="project" value="InterPro"/>
</dbReference>
<dbReference type="GO" id="GO:0006605">
    <property type="term" value="P:protein targeting"/>
    <property type="evidence" value="ECO:0007669"/>
    <property type="project" value="UniProtKB-UniRule"/>
</dbReference>
<dbReference type="GO" id="GO:0043952">
    <property type="term" value="P:protein transport by the Sec complex"/>
    <property type="evidence" value="ECO:0007669"/>
    <property type="project" value="TreeGrafter"/>
</dbReference>
<dbReference type="CDD" id="cd17928">
    <property type="entry name" value="DEXDc_SecA"/>
    <property type="match status" value="1"/>
</dbReference>
<dbReference type="CDD" id="cd18803">
    <property type="entry name" value="SF2_C_secA"/>
    <property type="match status" value="1"/>
</dbReference>
<dbReference type="FunFam" id="3.40.50.300:FF:000081">
    <property type="entry name" value="Preprotein translocase subunit SecA"/>
    <property type="match status" value="1"/>
</dbReference>
<dbReference type="FunFam" id="3.40.50.300:FF:000113">
    <property type="entry name" value="Preprotein translocase subunit SecA"/>
    <property type="match status" value="1"/>
</dbReference>
<dbReference type="FunFam" id="3.90.1440.10:FF:000001">
    <property type="entry name" value="Preprotein translocase subunit SecA"/>
    <property type="match status" value="1"/>
</dbReference>
<dbReference type="FunFam" id="1.10.3060.10:FF:000003">
    <property type="entry name" value="Protein translocase subunit SecA"/>
    <property type="match status" value="1"/>
</dbReference>
<dbReference type="Gene3D" id="1.10.3060.10">
    <property type="entry name" value="Helical scaffold and wing domains of SecA"/>
    <property type="match status" value="1"/>
</dbReference>
<dbReference type="Gene3D" id="3.40.50.300">
    <property type="entry name" value="P-loop containing nucleotide triphosphate hydrolases"/>
    <property type="match status" value="2"/>
</dbReference>
<dbReference type="Gene3D" id="3.90.1440.10">
    <property type="entry name" value="SecA, preprotein cross-linking domain"/>
    <property type="match status" value="1"/>
</dbReference>
<dbReference type="HAMAP" id="MF_01382">
    <property type="entry name" value="SecA"/>
    <property type="match status" value="1"/>
</dbReference>
<dbReference type="InterPro" id="IPR014001">
    <property type="entry name" value="Helicase_ATP-bd"/>
</dbReference>
<dbReference type="InterPro" id="IPR001650">
    <property type="entry name" value="Helicase_C-like"/>
</dbReference>
<dbReference type="InterPro" id="IPR027417">
    <property type="entry name" value="P-loop_NTPase"/>
</dbReference>
<dbReference type="InterPro" id="IPR004027">
    <property type="entry name" value="SEC_C_motif"/>
</dbReference>
<dbReference type="InterPro" id="IPR000185">
    <property type="entry name" value="SecA"/>
</dbReference>
<dbReference type="InterPro" id="IPR020937">
    <property type="entry name" value="SecA_CS"/>
</dbReference>
<dbReference type="InterPro" id="IPR011115">
    <property type="entry name" value="SecA_DEAD"/>
</dbReference>
<dbReference type="InterPro" id="IPR014018">
    <property type="entry name" value="SecA_motor_DEAD"/>
</dbReference>
<dbReference type="InterPro" id="IPR011130">
    <property type="entry name" value="SecA_preprotein_X-link_dom"/>
</dbReference>
<dbReference type="InterPro" id="IPR044722">
    <property type="entry name" value="SecA_SF2_C"/>
</dbReference>
<dbReference type="InterPro" id="IPR011116">
    <property type="entry name" value="SecA_Wing/Scaffold"/>
</dbReference>
<dbReference type="InterPro" id="IPR036266">
    <property type="entry name" value="SecA_Wing/Scaffold_sf"/>
</dbReference>
<dbReference type="InterPro" id="IPR036670">
    <property type="entry name" value="SecA_X-link_sf"/>
</dbReference>
<dbReference type="NCBIfam" id="NF009538">
    <property type="entry name" value="PRK12904.1"/>
    <property type="match status" value="1"/>
</dbReference>
<dbReference type="NCBIfam" id="TIGR00963">
    <property type="entry name" value="secA"/>
    <property type="match status" value="1"/>
</dbReference>
<dbReference type="PANTHER" id="PTHR30612:SF0">
    <property type="entry name" value="CHLOROPLAST PROTEIN-TRANSPORTING ATPASE"/>
    <property type="match status" value="1"/>
</dbReference>
<dbReference type="PANTHER" id="PTHR30612">
    <property type="entry name" value="SECA INNER MEMBRANE COMPONENT OF SEC PROTEIN SECRETION SYSTEM"/>
    <property type="match status" value="1"/>
</dbReference>
<dbReference type="Pfam" id="PF21090">
    <property type="entry name" value="P-loop_SecA"/>
    <property type="match status" value="1"/>
</dbReference>
<dbReference type="Pfam" id="PF02810">
    <property type="entry name" value="SEC-C"/>
    <property type="match status" value="1"/>
</dbReference>
<dbReference type="Pfam" id="PF07517">
    <property type="entry name" value="SecA_DEAD"/>
    <property type="match status" value="1"/>
</dbReference>
<dbReference type="Pfam" id="PF01043">
    <property type="entry name" value="SecA_PP_bind"/>
    <property type="match status" value="1"/>
</dbReference>
<dbReference type="Pfam" id="PF07516">
    <property type="entry name" value="SecA_SW"/>
    <property type="match status" value="1"/>
</dbReference>
<dbReference type="PRINTS" id="PR00906">
    <property type="entry name" value="SECA"/>
</dbReference>
<dbReference type="SMART" id="SM00957">
    <property type="entry name" value="SecA_DEAD"/>
    <property type="match status" value="1"/>
</dbReference>
<dbReference type="SMART" id="SM00958">
    <property type="entry name" value="SecA_PP_bind"/>
    <property type="match status" value="1"/>
</dbReference>
<dbReference type="SUPFAM" id="SSF81886">
    <property type="entry name" value="Helical scaffold and wing domains of SecA"/>
    <property type="match status" value="1"/>
</dbReference>
<dbReference type="SUPFAM" id="SSF52540">
    <property type="entry name" value="P-loop containing nucleoside triphosphate hydrolases"/>
    <property type="match status" value="2"/>
</dbReference>
<dbReference type="SUPFAM" id="SSF81767">
    <property type="entry name" value="Pre-protein crosslinking domain of SecA"/>
    <property type="match status" value="1"/>
</dbReference>
<dbReference type="PROSITE" id="PS01312">
    <property type="entry name" value="SECA"/>
    <property type="match status" value="1"/>
</dbReference>
<dbReference type="PROSITE" id="PS51196">
    <property type="entry name" value="SECA_MOTOR_DEAD"/>
    <property type="match status" value="1"/>
</dbReference>
<comment type="function">
    <text evidence="1">Part of the Sec protein translocase complex. Interacts with the SecYEG preprotein conducting channel. Has a central role in coupling the hydrolysis of ATP to the transfer of proteins into and across the cell membrane, serving both as a receptor for the preprotein-SecB complex and as an ATP-driven molecular motor driving the stepwise translocation of polypeptide chains across the membrane.</text>
</comment>
<comment type="catalytic activity">
    <reaction evidence="1">
        <text>ATP + H2O + cellular proteinSide 1 = ADP + phosphate + cellular proteinSide 2.</text>
        <dbReference type="EC" id="7.4.2.8"/>
    </reaction>
</comment>
<comment type="cofactor">
    <cofactor evidence="1">
        <name>Zn(2+)</name>
        <dbReference type="ChEBI" id="CHEBI:29105"/>
    </cofactor>
    <text evidence="1">May bind 1 zinc ion per subunit.</text>
</comment>
<comment type="subunit">
    <text evidence="1">Monomer and homodimer. Part of the essential Sec protein translocation apparatus which comprises SecA, SecYEG and auxiliary proteins SecDF-YajC and YidC.</text>
</comment>
<comment type="subcellular location">
    <subcellularLocation>
        <location evidence="1">Cell inner membrane</location>
        <topology evidence="1">Peripheral membrane protein</topology>
        <orientation evidence="1">Cytoplasmic side</orientation>
    </subcellularLocation>
    <subcellularLocation>
        <location evidence="1">Cytoplasm</location>
    </subcellularLocation>
    <text evidence="1">Distribution is 50-50.</text>
</comment>
<comment type="similarity">
    <text evidence="1">Belongs to the SecA family.</text>
</comment>
<comment type="sequence caution" evidence="3">
    <conflict type="erroneous initiation">
        <sequence resource="EMBL-CDS" id="ABP80804"/>
    </conflict>
    <text>Extended N-terminus.</text>
</comment>
<sequence length="913" mass="103615">MFAPLLKKLFGSKNEREVKRMLKAVQSVNALEEQMLSLSDEQLRSKTEEFKARLEKGETLDQILPEAFAVCREAGKRVMGMRHFDVQLIGGMTLHEGRIAEMRTGEGKTLVATLAVYLNALAGKGVHVVTVNDYLARRDANWMRPLYEFLGLSVGIVTPFQPPEEKRAAYASDITYGTNNEFGFDYLRDNMAFSLQEKNQRELNFAVIDEVDSILIDEARTPLIISGQAEDSSKLYQQINLLIPRLTQHIEEEEGVVTQEGHFSIDEKTRQVELNEQGHQYIEELLTQAGLLAEGESLYSAHNLGLLTHVYSGLRAHKLFHRNVEYIVQNNQVLLIDEHTGRTMPGRRLSEGLHQAIEAKEGLQIQPESQTLASTTFQNYFRLYKKLAGMTGTADTEAFEFQQIYSLPVVVIPTNKPLARKDFNDLVYLTQEEKFAAIIADIKECRNQGRPVLVGTATIESSEYVSRLLEAEGFEHKVLNAKHHDKEAEIIAQAGRPGAVTIATNMAGRGTDILLGGNWEVEVAALENATEEQIAQIKADWQKRHQQVLEAGGLHVIASERHESRRIDNQLRGRAGRQGDPGSSRFYLSLEDSLMRIFASDRVKNFMKALGMESGEAIEHRMVTNAIEKAQRKVEGRNFDMRKQLLEYDDVANEQRKVIYHMRNSLLAADEIGQTIAEFRQEALDAAISAHIPPQSLPEQWDIPGLEAVLYSDFGTRLPIQQWLDEDEKLYEETLREKILQALLDAYNEKEDMAGAEALRSFEKQIVLRVLDDLWKDHLSTMDHLRHGIHLRGYAQKNPKQEYKRESFTLFQDLLESIKRDSIRVLSHVQVRREDPAEEEARLRHEAEELAKRMQFQHAEVSALDQPEEEPAEVEGQPDVAVASVRTEPKIGRNEPCPCGSGKKYKHCHGQVQ</sequence>
<protein>
    <recommendedName>
        <fullName evidence="1">Protein translocase subunit SecA</fullName>
        <ecNumber evidence="1">7.4.2.8</ecNumber>
    </recommendedName>
</protein>
<proteinExistence type="inferred from homology"/>
<reference key="1">
    <citation type="journal article" date="2008" name="Proc. Natl. Acad. Sci. U.S.A.">
        <title>Nitrogen fixation island and rhizosphere competence traits in the genome of root-associated Pseudomonas stutzeri A1501.</title>
        <authorList>
            <person name="Yan Y."/>
            <person name="Yang J."/>
            <person name="Dou Y."/>
            <person name="Chen M."/>
            <person name="Ping S."/>
            <person name="Peng J."/>
            <person name="Lu W."/>
            <person name="Zhang W."/>
            <person name="Yao Z."/>
            <person name="Li H."/>
            <person name="Liu W."/>
            <person name="He S."/>
            <person name="Geng L."/>
            <person name="Zhang X."/>
            <person name="Yang F."/>
            <person name="Yu H."/>
            <person name="Zhan Y."/>
            <person name="Li D."/>
            <person name="Lin Z."/>
            <person name="Wang Y."/>
            <person name="Elmerich C."/>
            <person name="Lin M."/>
            <person name="Jin Q."/>
        </authorList>
    </citation>
    <scope>NUCLEOTIDE SEQUENCE [LARGE SCALE GENOMIC DNA]</scope>
    <source>
        <strain>A1501</strain>
    </source>
</reference>
<feature type="chain" id="PRO_0000320902" description="Protein translocase subunit SecA">
    <location>
        <begin position="1"/>
        <end position="913"/>
    </location>
</feature>
<feature type="region of interest" description="Disordered" evidence="2">
    <location>
        <begin position="864"/>
        <end position="913"/>
    </location>
</feature>
<feature type="compositionally biased region" description="Basic residues" evidence="2">
    <location>
        <begin position="903"/>
        <end position="913"/>
    </location>
</feature>
<feature type="binding site" evidence="1">
    <location>
        <position position="87"/>
    </location>
    <ligand>
        <name>ATP</name>
        <dbReference type="ChEBI" id="CHEBI:30616"/>
    </ligand>
</feature>
<feature type="binding site" evidence="1">
    <location>
        <begin position="105"/>
        <end position="109"/>
    </location>
    <ligand>
        <name>ATP</name>
        <dbReference type="ChEBI" id="CHEBI:30616"/>
    </ligand>
</feature>
<feature type="binding site" evidence="1">
    <location>
        <position position="512"/>
    </location>
    <ligand>
        <name>ATP</name>
        <dbReference type="ChEBI" id="CHEBI:30616"/>
    </ligand>
</feature>
<feature type="binding site" evidence="1">
    <location>
        <position position="897"/>
    </location>
    <ligand>
        <name>Zn(2+)</name>
        <dbReference type="ChEBI" id="CHEBI:29105"/>
    </ligand>
</feature>
<feature type="binding site" evidence="1">
    <location>
        <position position="899"/>
    </location>
    <ligand>
        <name>Zn(2+)</name>
        <dbReference type="ChEBI" id="CHEBI:29105"/>
    </ligand>
</feature>
<feature type="binding site" evidence="1">
    <location>
        <position position="908"/>
    </location>
    <ligand>
        <name>Zn(2+)</name>
        <dbReference type="ChEBI" id="CHEBI:29105"/>
    </ligand>
</feature>
<feature type="binding site" evidence="1">
    <location>
        <position position="909"/>
    </location>
    <ligand>
        <name>Zn(2+)</name>
        <dbReference type="ChEBI" id="CHEBI:29105"/>
    </ligand>
</feature>
<name>SECA_STUS1</name>
<evidence type="ECO:0000255" key="1">
    <source>
        <dbReference type="HAMAP-Rule" id="MF_01382"/>
    </source>
</evidence>
<evidence type="ECO:0000256" key="2">
    <source>
        <dbReference type="SAM" id="MobiDB-lite"/>
    </source>
</evidence>
<evidence type="ECO:0000305" key="3"/>
<keyword id="KW-0067">ATP-binding</keyword>
<keyword id="KW-0997">Cell inner membrane</keyword>
<keyword id="KW-1003">Cell membrane</keyword>
<keyword id="KW-0963">Cytoplasm</keyword>
<keyword id="KW-0472">Membrane</keyword>
<keyword id="KW-0479">Metal-binding</keyword>
<keyword id="KW-0547">Nucleotide-binding</keyword>
<keyword id="KW-0653">Protein transport</keyword>
<keyword id="KW-1185">Reference proteome</keyword>
<keyword id="KW-1278">Translocase</keyword>
<keyword id="KW-0811">Translocation</keyword>
<keyword id="KW-0813">Transport</keyword>
<keyword id="KW-0862">Zinc</keyword>
<organism>
    <name type="scientific">Stutzerimonas stutzeri (strain A1501)</name>
    <name type="common">Pseudomonas stutzeri</name>
    <dbReference type="NCBI Taxonomy" id="379731"/>
    <lineage>
        <taxon>Bacteria</taxon>
        <taxon>Pseudomonadati</taxon>
        <taxon>Pseudomonadota</taxon>
        <taxon>Gammaproteobacteria</taxon>
        <taxon>Pseudomonadales</taxon>
        <taxon>Pseudomonadaceae</taxon>
        <taxon>Stutzerimonas</taxon>
    </lineage>
</organism>
<gene>
    <name evidence="1" type="primary">secA</name>
    <name type="ordered locus">PST_3166</name>
</gene>
<accession>A4VPA3</accession>